<keyword id="KW-0067">ATP-binding</keyword>
<keyword id="KW-0963">Cytoplasm</keyword>
<keyword id="KW-0418">Kinase</keyword>
<keyword id="KW-0547">Nucleotide-binding</keyword>
<keyword id="KW-0539">Nucleus</keyword>
<keyword id="KW-1185">Reference proteome</keyword>
<keyword id="KW-0723">Serine/threonine-protein kinase</keyword>
<keyword id="KW-0808">Transferase</keyword>
<protein>
    <recommendedName>
        <fullName evidence="2">Cyclin-dependent kinase-like 2</fullName>
        <ecNumber>2.7.11.22</ecNumber>
    </recommendedName>
</protein>
<dbReference type="EC" id="2.7.11.22"/>
<dbReference type="EMBL" id="CR860264">
    <property type="protein sequence ID" value="CAH92406.1"/>
    <property type="molecule type" value="mRNA"/>
</dbReference>
<dbReference type="RefSeq" id="NP_001126419.1">
    <property type="nucleotide sequence ID" value="NM_001132947.1"/>
</dbReference>
<dbReference type="SMR" id="Q5R754"/>
<dbReference type="FunCoup" id="Q5R754">
    <property type="interactions" value="1380"/>
</dbReference>
<dbReference type="GeneID" id="100173402"/>
<dbReference type="KEGG" id="pon:100173402"/>
<dbReference type="CTD" id="8999"/>
<dbReference type="InParanoid" id="Q5R754"/>
<dbReference type="OrthoDB" id="548217at2759"/>
<dbReference type="Proteomes" id="UP000001595">
    <property type="component" value="Unplaced"/>
</dbReference>
<dbReference type="GO" id="GO:0005737">
    <property type="term" value="C:cytoplasm"/>
    <property type="evidence" value="ECO:0007669"/>
    <property type="project" value="UniProtKB-SubCell"/>
</dbReference>
<dbReference type="GO" id="GO:0005634">
    <property type="term" value="C:nucleus"/>
    <property type="evidence" value="ECO:0007669"/>
    <property type="project" value="UniProtKB-SubCell"/>
</dbReference>
<dbReference type="GO" id="GO:0005524">
    <property type="term" value="F:ATP binding"/>
    <property type="evidence" value="ECO:0007669"/>
    <property type="project" value="UniProtKB-KW"/>
</dbReference>
<dbReference type="GO" id="GO:0004693">
    <property type="term" value="F:cyclin-dependent protein serine/threonine kinase activity"/>
    <property type="evidence" value="ECO:0007669"/>
    <property type="project" value="UniProtKB-EC"/>
</dbReference>
<dbReference type="GO" id="GO:0106310">
    <property type="term" value="F:protein serine kinase activity"/>
    <property type="evidence" value="ECO:0007669"/>
    <property type="project" value="RHEA"/>
</dbReference>
<dbReference type="CDD" id="cd07846">
    <property type="entry name" value="STKc_CDKL2_3"/>
    <property type="match status" value="1"/>
</dbReference>
<dbReference type="FunFam" id="3.30.200.20:FF:000049">
    <property type="entry name" value="cyclin-dependent kinase-like 1 isoform X1"/>
    <property type="match status" value="1"/>
</dbReference>
<dbReference type="FunFam" id="1.10.510.10:FF:000261">
    <property type="entry name" value="cyclin-dependent kinase-like 2 isoform X2"/>
    <property type="match status" value="1"/>
</dbReference>
<dbReference type="Gene3D" id="3.30.200.20">
    <property type="entry name" value="Phosphorylase Kinase, domain 1"/>
    <property type="match status" value="1"/>
</dbReference>
<dbReference type="Gene3D" id="1.10.510.10">
    <property type="entry name" value="Transferase(Phosphotransferase) domain 1"/>
    <property type="match status" value="1"/>
</dbReference>
<dbReference type="InterPro" id="IPR050108">
    <property type="entry name" value="CDK"/>
</dbReference>
<dbReference type="InterPro" id="IPR011009">
    <property type="entry name" value="Kinase-like_dom_sf"/>
</dbReference>
<dbReference type="InterPro" id="IPR000719">
    <property type="entry name" value="Prot_kinase_dom"/>
</dbReference>
<dbReference type="InterPro" id="IPR017441">
    <property type="entry name" value="Protein_kinase_ATP_BS"/>
</dbReference>
<dbReference type="InterPro" id="IPR008271">
    <property type="entry name" value="Ser/Thr_kinase_AS"/>
</dbReference>
<dbReference type="PANTHER" id="PTHR24056">
    <property type="entry name" value="CELL DIVISION PROTEIN KINASE"/>
    <property type="match status" value="1"/>
</dbReference>
<dbReference type="PANTHER" id="PTHR24056:SF241">
    <property type="entry name" value="CYCLIN-DEPENDENT KINASE-LIKE 2"/>
    <property type="match status" value="1"/>
</dbReference>
<dbReference type="Pfam" id="PF00069">
    <property type="entry name" value="Pkinase"/>
    <property type="match status" value="1"/>
</dbReference>
<dbReference type="SMART" id="SM00220">
    <property type="entry name" value="S_TKc"/>
    <property type="match status" value="1"/>
</dbReference>
<dbReference type="SUPFAM" id="SSF56112">
    <property type="entry name" value="Protein kinase-like (PK-like)"/>
    <property type="match status" value="1"/>
</dbReference>
<dbReference type="PROSITE" id="PS00107">
    <property type="entry name" value="PROTEIN_KINASE_ATP"/>
    <property type="match status" value="1"/>
</dbReference>
<dbReference type="PROSITE" id="PS50011">
    <property type="entry name" value="PROTEIN_KINASE_DOM"/>
    <property type="match status" value="1"/>
</dbReference>
<dbReference type="PROSITE" id="PS00108">
    <property type="entry name" value="PROTEIN_KINASE_ST"/>
    <property type="match status" value="1"/>
</dbReference>
<reference key="1">
    <citation type="submission" date="2004-11" db="EMBL/GenBank/DDBJ databases">
        <authorList>
            <consortium name="The German cDNA consortium"/>
        </authorList>
    </citation>
    <scope>NUCLEOTIDE SEQUENCE [LARGE SCALE MRNA]</scope>
    <source>
        <tissue>Brain cortex</tissue>
    </source>
</reference>
<organism>
    <name type="scientific">Pongo abelii</name>
    <name type="common">Sumatran orangutan</name>
    <name type="synonym">Pongo pygmaeus abelii</name>
    <dbReference type="NCBI Taxonomy" id="9601"/>
    <lineage>
        <taxon>Eukaryota</taxon>
        <taxon>Metazoa</taxon>
        <taxon>Chordata</taxon>
        <taxon>Craniata</taxon>
        <taxon>Vertebrata</taxon>
        <taxon>Euteleostomi</taxon>
        <taxon>Mammalia</taxon>
        <taxon>Eutheria</taxon>
        <taxon>Euarchontoglires</taxon>
        <taxon>Primates</taxon>
        <taxon>Haplorrhini</taxon>
        <taxon>Catarrhini</taxon>
        <taxon>Hominidae</taxon>
        <taxon>Pongo</taxon>
    </lineage>
</organism>
<accession>Q5R754</accession>
<gene>
    <name evidence="2" type="primary">CDKL2</name>
</gene>
<comment type="catalytic activity">
    <reaction>
        <text>L-seryl-[protein] + ATP = O-phospho-L-seryl-[protein] + ADP + H(+)</text>
        <dbReference type="Rhea" id="RHEA:17989"/>
        <dbReference type="Rhea" id="RHEA-COMP:9863"/>
        <dbReference type="Rhea" id="RHEA-COMP:11604"/>
        <dbReference type="ChEBI" id="CHEBI:15378"/>
        <dbReference type="ChEBI" id="CHEBI:29999"/>
        <dbReference type="ChEBI" id="CHEBI:30616"/>
        <dbReference type="ChEBI" id="CHEBI:83421"/>
        <dbReference type="ChEBI" id="CHEBI:456216"/>
        <dbReference type="EC" id="2.7.11.22"/>
    </reaction>
</comment>
<comment type="catalytic activity">
    <reaction>
        <text>L-threonyl-[protein] + ATP = O-phospho-L-threonyl-[protein] + ADP + H(+)</text>
        <dbReference type="Rhea" id="RHEA:46608"/>
        <dbReference type="Rhea" id="RHEA-COMP:11060"/>
        <dbReference type="Rhea" id="RHEA-COMP:11605"/>
        <dbReference type="ChEBI" id="CHEBI:15378"/>
        <dbReference type="ChEBI" id="CHEBI:30013"/>
        <dbReference type="ChEBI" id="CHEBI:30616"/>
        <dbReference type="ChEBI" id="CHEBI:61977"/>
        <dbReference type="ChEBI" id="CHEBI:456216"/>
        <dbReference type="EC" id="2.7.11.22"/>
    </reaction>
</comment>
<comment type="subcellular location">
    <subcellularLocation>
        <location evidence="1">Cytoplasm</location>
    </subcellularLocation>
    <subcellularLocation>
        <location evidence="1">Nucleus</location>
    </subcellularLocation>
</comment>
<comment type="domain">
    <text>The [NKR]KIAxRE motif seems to be a cyclin-binding region.</text>
</comment>
<comment type="similarity">
    <text evidence="6">Belongs to the protein kinase superfamily. CMGC Ser/Thr protein kinase family. CDC2/CDKX subfamily.</text>
</comment>
<name>CDKL2_PONAB</name>
<sequence>MEKYENLGLVGEGSYGMVMKCRNKDTGRIVAIKKFLESDDDKMVKKIAMREIKLLKQLRHENLVNLLEVCKKKKRWYLVFEFVDHTILDDLELFPNGLDYQVVQKYLFQIINGIGFCHSHNIIHRDIKPENILVSKSGVVKLCDFGFARTLAAPGEVYTDYVATRWYRAPELLVGDVKYGKAVDVWAIGCLVTEMFMGEPLFPGDSDIDQLYHIMMCLGNLIPRHQELFYKNPVFAGVRLPEIKEREPLERRYPKLSEVVIDLAKKCLHIDPDKRPFCAELLHHDFFQMDGFAERFSQELQLKVQKDARNVSLSKKSQNRKKEKEKDDSLGEERKTLVVQDTNADPKIKDCKLFKIKGSKIDGEKAEKGSRASNASCLHDSRTSHNKIVPSTSLKDCSNVSVDHTRNPSVAIPPLTHNLSAVAPGINSGMGTATIPIQGHRVDEKTKKCSIPFVKPNRHSPSGIYNINVTTLVSGPPLSDDSGADLPQMEHQH</sequence>
<evidence type="ECO:0000250" key="1"/>
<evidence type="ECO:0000250" key="2">
    <source>
        <dbReference type="UniProtKB" id="Q92772"/>
    </source>
</evidence>
<evidence type="ECO:0000255" key="3">
    <source>
        <dbReference type="PROSITE-ProRule" id="PRU00159"/>
    </source>
</evidence>
<evidence type="ECO:0000255" key="4">
    <source>
        <dbReference type="PROSITE-ProRule" id="PRU10027"/>
    </source>
</evidence>
<evidence type="ECO:0000256" key="5">
    <source>
        <dbReference type="SAM" id="MobiDB-lite"/>
    </source>
</evidence>
<evidence type="ECO:0000305" key="6"/>
<proteinExistence type="evidence at transcript level"/>
<feature type="chain" id="PRO_0000085817" description="Cyclin-dependent kinase-like 2">
    <location>
        <begin position="1"/>
        <end position="493"/>
    </location>
</feature>
<feature type="domain" description="Protein kinase" evidence="3">
    <location>
        <begin position="4"/>
        <end position="287"/>
    </location>
</feature>
<feature type="region of interest" description="Disordered" evidence="5">
    <location>
        <begin position="311"/>
        <end position="338"/>
    </location>
</feature>
<feature type="region of interest" description="Disordered" evidence="5">
    <location>
        <begin position="363"/>
        <end position="384"/>
    </location>
</feature>
<feature type="short sequence motif" description="[NKR]KIAxRE">
    <location>
        <begin position="45"/>
        <end position="51"/>
    </location>
</feature>
<feature type="compositionally biased region" description="Basic and acidic residues" evidence="5">
    <location>
        <begin position="320"/>
        <end position="336"/>
    </location>
</feature>
<feature type="active site" description="Proton acceptor" evidence="3 4">
    <location>
        <position position="126"/>
    </location>
</feature>
<feature type="binding site" evidence="3">
    <location>
        <begin position="10"/>
        <end position="18"/>
    </location>
    <ligand>
        <name>ATP</name>
        <dbReference type="ChEBI" id="CHEBI:30616"/>
    </ligand>
</feature>
<feature type="binding site" evidence="3">
    <location>
        <position position="33"/>
    </location>
    <ligand>
        <name>ATP</name>
        <dbReference type="ChEBI" id="CHEBI:30616"/>
    </ligand>
</feature>